<comment type="function">
    <text>Cleaves the carbon-mercury bond of organomercurials such as phenylmercuric acetate. One product is Hg(2+), which is subsequently detoxified by the mercuric reductase.</text>
</comment>
<comment type="catalytic activity">
    <reaction>
        <text>an alkylmercury + H(+) = an alkane + Hg(2+)</text>
        <dbReference type="Rhea" id="RHEA:18777"/>
        <dbReference type="ChEBI" id="CHEBI:15378"/>
        <dbReference type="ChEBI" id="CHEBI:16793"/>
        <dbReference type="ChEBI" id="CHEBI:18310"/>
        <dbReference type="ChEBI" id="CHEBI:83725"/>
        <dbReference type="EC" id="4.99.1.2"/>
    </reaction>
</comment>
<comment type="similarity">
    <text evidence="1">Belongs to the MerB family.</text>
</comment>
<gene>
    <name type="primary">merB1</name>
    <name type="synonym">merB</name>
</gene>
<reference key="1">
    <citation type="journal article" date="1989" name="J. Bacteriol.">
        <title>Nucleotide sequence of a chromosomal mercury resistance determinant from a Bacillus sp. with broad-spectrum mercury resistance.</title>
        <authorList>
            <person name="Wang Y."/>
            <person name="Moore M."/>
            <person name="Levinson H.S."/>
            <person name="Silver S."/>
            <person name="Walsh C.T."/>
            <person name="Mahler I."/>
        </authorList>
    </citation>
    <scope>NUCLEOTIDE SEQUENCE [GENOMIC DNA]</scope>
    <source>
        <strain>RC607</strain>
        <transposon>Tn5084</transposon>
    </source>
</reference>
<reference key="2">
    <citation type="journal article" date="1999" name="J. Bacteriol.">
        <title>Mercury resistance in Bacillus cereus RC607: transcriptional organization and two new open reading frames.</title>
        <authorList>
            <person name="Gupta A."/>
            <person name="Phung L.T."/>
            <person name="Chakravarty L."/>
            <person name="Silver S."/>
        </authorList>
    </citation>
    <scope>NUCLEOTIDE SEQUENCE [GENOMIC DNA]</scope>
    <source>
        <strain>RC607</strain>
        <transposon>Tn5084</transposon>
    </source>
</reference>
<proteinExistence type="inferred from homology"/>
<feature type="chain" id="PRO_0000220354" description="Alkylmercury lyase">
    <location>
        <begin position="1"/>
        <end position="218"/>
    </location>
</feature>
<feature type="sequence conflict" description="In Ref. 1; AAA83978." evidence="1" ref="1">
    <original>D</original>
    <variation>H</variation>
    <location>
        <position position="217"/>
    </location>
</feature>
<evidence type="ECO:0000305" key="1"/>
<name>MERB_BACCE</name>
<protein>
    <recommendedName>
        <fullName>Alkylmercury lyase</fullName>
        <ecNumber>4.99.1.2</ecNumber>
    </recommendedName>
    <alternativeName>
        <fullName>Organomercurial lyase</fullName>
    </alternativeName>
</protein>
<dbReference type="EC" id="4.99.1.2"/>
<dbReference type="EMBL" id="AF138877">
    <property type="protein sequence ID" value="AAA83978.1"/>
    <property type="molecule type" value="Genomic_DNA"/>
</dbReference>
<dbReference type="EMBL" id="AB066362">
    <property type="protein sequence ID" value="BAB62436.1"/>
    <property type="molecule type" value="Genomic_DNA"/>
</dbReference>
<dbReference type="RefSeq" id="WP_000845541.1">
    <property type="nucleotide sequence ID" value="NZ_VEGO01000042.1"/>
</dbReference>
<dbReference type="SMR" id="P16172"/>
<dbReference type="BRENDA" id="4.99.1.2">
    <property type="organism ID" value="648"/>
</dbReference>
<dbReference type="GO" id="GO:0018836">
    <property type="term" value="F:alkylmercury lyase activity"/>
    <property type="evidence" value="ECO:0007669"/>
    <property type="project" value="UniProtKB-UniRule"/>
</dbReference>
<dbReference type="GO" id="GO:0046689">
    <property type="term" value="P:response to mercury ion"/>
    <property type="evidence" value="ECO:0007669"/>
    <property type="project" value="UniProtKB-UniRule"/>
</dbReference>
<dbReference type="Gene3D" id="3.30.450.410">
    <property type="match status" value="1"/>
</dbReference>
<dbReference type="HAMAP" id="MF_00714">
    <property type="entry name" value="MerB"/>
    <property type="match status" value="1"/>
</dbReference>
<dbReference type="InterPro" id="IPR004927">
    <property type="entry name" value="MerB"/>
</dbReference>
<dbReference type="InterPro" id="IPR024259">
    <property type="entry name" value="MerB_HTH_dom"/>
</dbReference>
<dbReference type="InterPro" id="IPR053717">
    <property type="entry name" value="MerB_lyase_sf"/>
</dbReference>
<dbReference type="InterPro" id="IPR036390">
    <property type="entry name" value="WH_DNA-bd_sf"/>
</dbReference>
<dbReference type="NCBIfam" id="NF033555">
    <property type="entry name" value="lyase_MerB"/>
    <property type="match status" value="1"/>
</dbReference>
<dbReference type="NCBIfam" id="NF009710">
    <property type="entry name" value="PRK13239.1"/>
    <property type="match status" value="1"/>
</dbReference>
<dbReference type="Pfam" id="PF12324">
    <property type="entry name" value="HTH_15"/>
    <property type="match status" value="1"/>
</dbReference>
<dbReference type="Pfam" id="PF03243">
    <property type="entry name" value="MerB"/>
    <property type="match status" value="1"/>
</dbReference>
<dbReference type="PIRSF" id="PIRSF001458">
    <property type="entry name" value="MerB"/>
    <property type="match status" value="1"/>
</dbReference>
<dbReference type="PRINTS" id="PR01699">
    <property type="entry name" value="ORGNOHGLYASE"/>
</dbReference>
<dbReference type="SUPFAM" id="SSF160387">
    <property type="entry name" value="NosL/MerB-like"/>
    <property type="match status" value="1"/>
</dbReference>
<dbReference type="SUPFAM" id="SSF46785">
    <property type="entry name" value="Winged helix' DNA-binding domain"/>
    <property type="match status" value="1"/>
</dbReference>
<organism>
    <name type="scientific">Bacillus cereus</name>
    <dbReference type="NCBI Taxonomy" id="1396"/>
    <lineage>
        <taxon>Bacteria</taxon>
        <taxon>Bacillati</taxon>
        <taxon>Bacillota</taxon>
        <taxon>Bacilli</taxon>
        <taxon>Bacillales</taxon>
        <taxon>Bacillaceae</taxon>
        <taxon>Bacillus</taxon>
        <taxon>Bacillus cereus group</taxon>
    </lineage>
</organism>
<accession>P16172</accession>
<accession>Q93R38</accession>
<sequence>MKTEIQEIVTRLDQQSNKGEGGESMKWLFRPLLQMLAGGESVTIEDMATTTGKPVEEVKKVLQSLPSVEIDEQGRVVGLGLTLIPTPHHFTVDGKQLYAWCALDTLIFPALIGRSVNIESPCHSTGEPIRLNVEPDHIVSVEPSTAVVSIVTPDDMSSIRTAFCNEVHFFSSPNAAEDWLDQHPGGKVLSVEDAFELGRLMGTRYEESRPANGSCCDI</sequence>
<keyword id="KW-0456">Lyase</keyword>
<keyword id="KW-0475">Mercuric resistance</keyword>
<keyword id="KW-0476">Mercury</keyword>
<keyword id="KW-0814">Transposable element</keyword>